<gene>
    <name type="primary">uba2</name>
    <name type="synonym">sae2</name>
    <name type="ORF">DDB_G0286919</name>
</gene>
<accession>Q54L40</accession>
<feature type="chain" id="PRO_0000328132" description="SUMO-activating enzyme subunit 2">
    <location>
        <begin position="1"/>
        <end position="661"/>
    </location>
</feature>
<feature type="region of interest" description="Disordered" evidence="2">
    <location>
        <begin position="545"/>
        <end position="661"/>
    </location>
</feature>
<feature type="compositionally biased region" description="Basic and acidic residues" evidence="2">
    <location>
        <begin position="548"/>
        <end position="563"/>
    </location>
</feature>
<feature type="compositionally biased region" description="Low complexity" evidence="2">
    <location>
        <begin position="577"/>
        <end position="607"/>
    </location>
</feature>
<feature type="compositionally biased region" description="Low complexity" evidence="2">
    <location>
        <begin position="623"/>
        <end position="634"/>
    </location>
</feature>
<feature type="active site" description="Glycyl thioester intermediate" evidence="1">
    <location>
        <position position="178"/>
    </location>
</feature>
<feature type="binding site" evidence="1">
    <location>
        <begin position="29"/>
        <end position="34"/>
    </location>
    <ligand>
        <name>ATP</name>
        <dbReference type="ChEBI" id="CHEBI:30616"/>
    </ligand>
</feature>
<feature type="binding site" evidence="1">
    <location>
        <position position="53"/>
    </location>
    <ligand>
        <name>ATP</name>
        <dbReference type="ChEBI" id="CHEBI:30616"/>
    </ligand>
</feature>
<feature type="binding site" evidence="1">
    <location>
        <begin position="61"/>
        <end position="64"/>
    </location>
    <ligand>
        <name>ATP</name>
        <dbReference type="ChEBI" id="CHEBI:30616"/>
    </ligand>
</feature>
<feature type="binding site" evidence="1">
    <location>
        <position position="77"/>
    </location>
    <ligand>
        <name>ATP</name>
        <dbReference type="ChEBI" id="CHEBI:30616"/>
    </ligand>
</feature>
<feature type="binding site" evidence="1">
    <location>
        <begin position="122"/>
        <end position="127"/>
    </location>
    <ligand>
        <name>ATP</name>
        <dbReference type="ChEBI" id="CHEBI:30616"/>
    </ligand>
</feature>
<feature type="binding site" evidence="1">
    <location>
        <position position="163"/>
    </location>
    <ligand>
        <name>Zn(2+)</name>
        <dbReference type="ChEBI" id="CHEBI:29105"/>
    </ligand>
</feature>
<feature type="binding site" evidence="1">
    <location>
        <position position="166"/>
    </location>
    <ligand>
        <name>Zn(2+)</name>
        <dbReference type="ChEBI" id="CHEBI:29105"/>
    </ligand>
</feature>
<feature type="binding site" evidence="1">
    <location>
        <position position="436"/>
    </location>
    <ligand>
        <name>Zn(2+)</name>
        <dbReference type="ChEBI" id="CHEBI:29105"/>
    </ligand>
</feature>
<feature type="binding site" evidence="1">
    <location>
        <position position="439"/>
    </location>
    <ligand>
        <name>Zn(2+)</name>
        <dbReference type="ChEBI" id="CHEBI:29105"/>
    </ligand>
</feature>
<organism>
    <name type="scientific">Dictyostelium discoideum</name>
    <name type="common">Social amoeba</name>
    <dbReference type="NCBI Taxonomy" id="44689"/>
    <lineage>
        <taxon>Eukaryota</taxon>
        <taxon>Amoebozoa</taxon>
        <taxon>Evosea</taxon>
        <taxon>Eumycetozoa</taxon>
        <taxon>Dictyostelia</taxon>
        <taxon>Dictyosteliales</taxon>
        <taxon>Dictyosteliaceae</taxon>
        <taxon>Dictyostelium</taxon>
    </lineage>
</organism>
<sequence length="661" mass="74656">MSERYSHIIQALGQSTFDKIQTCKILVVGAGGIGCELLKNLVLTGFKNIDIIDLDTIDISNLNRQFLFRKQHIGMSKAKIAKESVMKYNEQVNITAHHGDVKSSEFGSEFFKQFDLVMNALDNISARRHVNRLCLSVDVPMIESGTAGYLGQVSVIRKGKTECFECQPIAVPKQFAVCTIRTNPSAPIHCIVWAKMLFGKLFGPKDDDGGGDSSSLTDLDNNIIHGTEELGNIKRDEQLLIEKEKGFKRWVFHKIFHTDIETLIHMPDLWKDKQPPTSLKLDEILSSKEVSQAEEEGDQLIFKLPDQKQWTFKENVEVFLDCLEKLKQQFDQSNSKPMTWDKDDELALSFVCSASNIRSKIFGIPMKSRFDVKSMAGNIIPAIATTNAVIGGLIVMEAIKVVDGRFDQCLSTYLYQLPSGKRLLMPTQLEPQNPKCFVCNRSFIICRLNTEKTTISQFIDHVLKKSLAVNEPILTVGNDIIYEGGDQDLSKEEIEQRSKIEKKTLATHRLTNDTSLVVEDYNQDFQITITIQHTTDFDEDTKKLKKQQQKEKDQKEGKTTTIEKEEDDKFFEIIGKTSQTTTTTTTTTTTTESDNNSNNNKNNNNNNDVEEDDGFMFIEDQPSSTTTSSATPSISKKRKEIDTNESEDLDSSKKLKSNLQD</sequence>
<reference key="1">
    <citation type="journal article" date="2005" name="Nature">
        <title>The genome of the social amoeba Dictyostelium discoideum.</title>
        <authorList>
            <person name="Eichinger L."/>
            <person name="Pachebat J.A."/>
            <person name="Gloeckner G."/>
            <person name="Rajandream M.A."/>
            <person name="Sucgang R."/>
            <person name="Berriman M."/>
            <person name="Song J."/>
            <person name="Olsen R."/>
            <person name="Szafranski K."/>
            <person name="Xu Q."/>
            <person name="Tunggal B."/>
            <person name="Kummerfeld S."/>
            <person name="Madera M."/>
            <person name="Konfortov B.A."/>
            <person name="Rivero F."/>
            <person name="Bankier A.T."/>
            <person name="Lehmann R."/>
            <person name="Hamlin N."/>
            <person name="Davies R."/>
            <person name="Gaudet P."/>
            <person name="Fey P."/>
            <person name="Pilcher K."/>
            <person name="Chen G."/>
            <person name="Saunders D."/>
            <person name="Sodergren E.J."/>
            <person name="Davis P."/>
            <person name="Kerhornou A."/>
            <person name="Nie X."/>
            <person name="Hall N."/>
            <person name="Anjard C."/>
            <person name="Hemphill L."/>
            <person name="Bason N."/>
            <person name="Farbrother P."/>
            <person name="Desany B."/>
            <person name="Just E."/>
            <person name="Morio T."/>
            <person name="Rost R."/>
            <person name="Churcher C.M."/>
            <person name="Cooper J."/>
            <person name="Haydock S."/>
            <person name="van Driessche N."/>
            <person name="Cronin A."/>
            <person name="Goodhead I."/>
            <person name="Muzny D.M."/>
            <person name="Mourier T."/>
            <person name="Pain A."/>
            <person name="Lu M."/>
            <person name="Harper D."/>
            <person name="Lindsay R."/>
            <person name="Hauser H."/>
            <person name="James K.D."/>
            <person name="Quiles M."/>
            <person name="Madan Babu M."/>
            <person name="Saito T."/>
            <person name="Buchrieser C."/>
            <person name="Wardroper A."/>
            <person name="Felder M."/>
            <person name="Thangavelu M."/>
            <person name="Johnson D."/>
            <person name="Knights A."/>
            <person name="Loulseged H."/>
            <person name="Mungall K.L."/>
            <person name="Oliver K."/>
            <person name="Price C."/>
            <person name="Quail M.A."/>
            <person name="Urushihara H."/>
            <person name="Hernandez J."/>
            <person name="Rabbinowitsch E."/>
            <person name="Steffen D."/>
            <person name="Sanders M."/>
            <person name="Ma J."/>
            <person name="Kohara Y."/>
            <person name="Sharp S."/>
            <person name="Simmonds M.N."/>
            <person name="Spiegler S."/>
            <person name="Tivey A."/>
            <person name="Sugano S."/>
            <person name="White B."/>
            <person name="Walker D."/>
            <person name="Woodward J.R."/>
            <person name="Winckler T."/>
            <person name="Tanaka Y."/>
            <person name="Shaulsky G."/>
            <person name="Schleicher M."/>
            <person name="Weinstock G.M."/>
            <person name="Rosenthal A."/>
            <person name="Cox E.C."/>
            <person name="Chisholm R.L."/>
            <person name="Gibbs R.A."/>
            <person name="Loomis W.F."/>
            <person name="Platzer M."/>
            <person name="Kay R.R."/>
            <person name="Williams J.G."/>
            <person name="Dear P.H."/>
            <person name="Noegel A.A."/>
            <person name="Barrell B.G."/>
            <person name="Kuspa A."/>
        </authorList>
    </citation>
    <scope>NUCLEOTIDE SEQUENCE [LARGE SCALE GENOMIC DNA]</scope>
    <source>
        <strain>AX4</strain>
    </source>
</reference>
<proteinExistence type="inferred from homology"/>
<protein>
    <recommendedName>
        <fullName>SUMO-activating enzyme subunit 2</fullName>
        <ecNumber>2.3.2.-</ecNumber>
    </recommendedName>
    <alternativeName>
        <fullName>Ubiquitin-like 1-activating enzyme E1B</fullName>
    </alternativeName>
</protein>
<dbReference type="EC" id="2.3.2.-"/>
<dbReference type="EMBL" id="AAFI02000092">
    <property type="protein sequence ID" value="EAL63957.1"/>
    <property type="molecule type" value="Genomic_DNA"/>
</dbReference>
<dbReference type="RefSeq" id="XP_637463.1">
    <property type="nucleotide sequence ID" value="XM_632371.1"/>
</dbReference>
<dbReference type="SMR" id="Q54L40"/>
<dbReference type="FunCoup" id="Q54L40">
    <property type="interactions" value="1452"/>
</dbReference>
<dbReference type="STRING" id="44689.Q54L40"/>
<dbReference type="GlyGen" id="Q54L40">
    <property type="glycosylation" value="1 site"/>
</dbReference>
<dbReference type="PaxDb" id="44689-DDB0302360"/>
<dbReference type="EnsemblProtists" id="EAL63957">
    <property type="protein sequence ID" value="EAL63957"/>
    <property type="gene ID" value="DDB_G0286919"/>
</dbReference>
<dbReference type="GeneID" id="8625862"/>
<dbReference type="KEGG" id="ddi:DDB_G0286919"/>
<dbReference type="dictyBase" id="DDB_G0286919">
    <property type="gene designation" value="uba2"/>
</dbReference>
<dbReference type="VEuPathDB" id="AmoebaDB:DDB_G0286919"/>
<dbReference type="eggNOG" id="KOG2013">
    <property type="taxonomic scope" value="Eukaryota"/>
</dbReference>
<dbReference type="HOGENOM" id="CLU_013325_7_3_1"/>
<dbReference type="InParanoid" id="Q54L40"/>
<dbReference type="OMA" id="TPSEHIH"/>
<dbReference type="PhylomeDB" id="Q54L40"/>
<dbReference type="Reactome" id="R-DDI-3065676">
    <property type="pathway name" value="SUMO is conjugated to E1 (UBA2:SAE1)"/>
</dbReference>
<dbReference type="Reactome" id="R-DDI-3065678">
    <property type="pathway name" value="SUMO is transferred from E1 to E2 (UBE2I, UBC9)"/>
</dbReference>
<dbReference type="UniPathway" id="UPA00886"/>
<dbReference type="PRO" id="PR:Q54L40"/>
<dbReference type="Proteomes" id="UP000002195">
    <property type="component" value="Chromosome 4"/>
</dbReference>
<dbReference type="GO" id="GO:0005737">
    <property type="term" value="C:cytoplasm"/>
    <property type="evidence" value="ECO:0000318"/>
    <property type="project" value="GO_Central"/>
</dbReference>
<dbReference type="GO" id="GO:0031510">
    <property type="term" value="C:SUMO activating enzyme complex"/>
    <property type="evidence" value="ECO:0000250"/>
    <property type="project" value="dictyBase"/>
</dbReference>
<dbReference type="GO" id="GO:0005524">
    <property type="term" value="F:ATP binding"/>
    <property type="evidence" value="ECO:0007669"/>
    <property type="project" value="UniProtKB-KW"/>
</dbReference>
<dbReference type="GO" id="GO:0046872">
    <property type="term" value="F:metal ion binding"/>
    <property type="evidence" value="ECO:0007669"/>
    <property type="project" value="UniProtKB-KW"/>
</dbReference>
<dbReference type="GO" id="GO:0019948">
    <property type="term" value="F:SUMO activating enzyme activity"/>
    <property type="evidence" value="ECO:0000250"/>
    <property type="project" value="dictyBase"/>
</dbReference>
<dbReference type="GO" id="GO:0016740">
    <property type="term" value="F:transferase activity"/>
    <property type="evidence" value="ECO:0007669"/>
    <property type="project" value="UniProtKB-KW"/>
</dbReference>
<dbReference type="GO" id="GO:0016925">
    <property type="term" value="P:protein sumoylation"/>
    <property type="evidence" value="ECO:0000250"/>
    <property type="project" value="dictyBase"/>
</dbReference>
<dbReference type="FunFam" id="1.10.10.520:FF:000010">
    <property type="entry name" value="SUMO-activating enzyme subunit"/>
    <property type="match status" value="1"/>
</dbReference>
<dbReference type="FunFam" id="3.10.290.20:FF:000013">
    <property type="entry name" value="SUMO-activating enzyme subunit 2"/>
    <property type="match status" value="1"/>
</dbReference>
<dbReference type="FunFam" id="3.40.50.720:FF:000618">
    <property type="entry name" value="SUMO-activating enzyme subunit 2"/>
    <property type="match status" value="1"/>
</dbReference>
<dbReference type="FunFam" id="3.50.50.80:FF:000002">
    <property type="entry name" value="SUMO-activating enzyme subunit 2"/>
    <property type="match status" value="1"/>
</dbReference>
<dbReference type="Gene3D" id="1.10.10.520">
    <property type="entry name" value="Ubiquitin activating enzymes (Uba3). Chain: B, domain 2"/>
    <property type="match status" value="1"/>
</dbReference>
<dbReference type="Gene3D" id="3.50.50.80">
    <property type="entry name" value="Ubiquitin-activating enzyme E1, inactive adenylation domain, subdomain 1"/>
    <property type="match status" value="1"/>
</dbReference>
<dbReference type="Gene3D" id="3.10.290.20">
    <property type="entry name" value="Ubiquitin-like 2 activating enzyme e1b. Chain: B, domain 3"/>
    <property type="match status" value="1"/>
</dbReference>
<dbReference type="InterPro" id="IPR045886">
    <property type="entry name" value="ThiF/MoeB/HesA"/>
</dbReference>
<dbReference type="InterPro" id="IPR000594">
    <property type="entry name" value="ThiF_NAD_FAD-bd"/>
</dbReference>
<dbReference type="InterPro" id="IPR028077">
    <property type="entry name" value="UAE_UbL_dom"/>
</dbReference>
<dbReference type="InterPro" id="IPR042449">
    <property type="entry name" value="Ub-E1_IAD_1"/>
</dbReference>
<dbReference type="InterPro" id="IPR023318">
    <property type="entry name" value="Ub_act_enz_dom_a_sf"/>
</dbReference>
<dbReference type="InterPro" id="IPR030661">
    <property type="entry name" value="Uba2"/>
</dbReference>
<dbReference type="InterPro" id="IPR019572">
    <property type="entry name" value="UBA_E1_SCCH"/>
</dbReference>
<dbReference type="InterPro" id="IPR035985">
    <property type="entry name" value="Ubiquitin-activating_enz"/>
</dbReference>
<dbReference type="PANTHER" id="PTHR10953:SF5">
    <property type="entry name" value="SUMO-ACTIVATING ENZYME SUBUNIT 2"/>
    <property type="match status" value="1"/>
</dbReference>
<dbReference type="PANTHER" id="PTHR10953">
    <property type="entry name" value="UBIQUITIN-ACTIVATING ENZYME E1"/>
    <property type="match status" value="1"/>
</dbReference>
<dbReference type="Pfam" id="PF00899">
    <property type="entry name" value="ThiF"/>
    <property type="match status" value="1"/>
</dbReference>
<dbReference type="Pfam" id="PF14732">
    <property type="entry name" value="UAE_UbL"/>
    <property type="match status" value="1"/>
</dbReference>
<dbReference type="Pfam" id="PF10585">
    <property type="entry name" value="UBA_E1_SCCH"/>
    <property type="match status" value="1"/>
</dbReference>
<dbReference type="PIRSF" id="PIRSF039133">
    <property type="entry name" value="SUMO_E1B"/>
    <property type="match status" value="1"/>
</dbReference>
<dbReference type="SUPFAM" id="SSF69572">
    <property type="entry name" value="Activating enzymes of the ubiquitin-like proteins"/>
    <property type="match status" value="1"/>
</dbReference>
<comment type="function">
    <text evidence="1">The dimeric enzyme acts as an E1 ligase for sumo. It mediates ATP-dependent activation of sumo and formation of a thioester with a conserved cysteine residue on sae2 (By similarity).</text>
</comment>
<comment type="pathway">
    <text>Protein modification; protein sumoylation.</text>
</comment>
<comment type="subunit">
    <text evidence="1">Heterodimer of sae1 and sae2. The complex binds sumo via sae2 (By similarity).</text>
</comment>
<comment type="subcellular location">
    <subcellularLocation>
        <location evidence="1">Nucleus</location>
    </subcellularLocation>
</comment>
<comment type="similarity">
    <text evidence="3">Belongs to the ubiquitin-activating E1 family.</text>
</comment>
<evidence type="ECO:0000250" key="1"/>
<evidence type="ECO:0000256" key="2">
    <source>
        <dbReference type="SAM" id="MobiDB-lite"/>
    </source>
</evidence>
<evidence type="ECO:0000305" key="3"/>
<keyword id="KW-0067">ATP-binding</keyword>
<keyword id="KW-0479">Metal-binding</keyword>
<keyword id="KW-0547">Nucleotide-binding</keyword>
<keyword id="KW-0539">Nucleus</keyword>
<keyword id="KW-1185">Reference proteome</keyword>
<keyword id="KW-0808">Transferase</keyword>
<keyword id="KW-0833">Ubl conjugation pathway</keyword>
<keyword id="KW-0862">Zinc</keyword>
<name>SAE2_DICDI</name>